<reference key="1">
    <citation type="journal article" date="2002" name="Proc. Natl. Acad. Sci. U.S.A.">
        <title>Complete genome sequence and comparative genomic analysis of an emerging human pathogen, serotype V Streptococcus agalactiae.</title>
        <authorList>
            <person name="Tettelin H."/>
            <person name="Masignani V."/>
            <person name="Cieslewicz M.J."/>
            <person name="Eisen J.A."/>
            <person name="Peterson S.N."/>
            <person name="Wessels M.R."/>
            <person name="Paulsen I.T."/>
            <person name="Nelson K.E."/>
            <person name="Margarit I."/>
            <person name="Read T.D."/>
            <person name="Madoff L.C."/>
            <person name="Wolf A.M."/>
            <person name="Beanan M.J."/>
            <person name="Brinkac L.M."/>
            <person name="Daugherty S.C."/>
            <person name="DeBoy R.T."/>
            <person name="Durkin A.S."/>
            <person name="Kolonay J.F."/>
            <person name="Madupu R."/>
            <person name="Lewis M.R."/>
            <person name="Radune D."/>
            <person name="Fedorova N.B."/>
            <person name="Scanlan D."/>
            <person name="Khouri H.M."/>
            <person name="Mulligan S."/>
            <person name="Carty H.A."/>
            <person name="Cline R.T."/>
            <person name="Van Aken S.E."/>
            <person name="Gill J."/>
            <person name="Scarselli M."/>
            <person name="Mora M."/>
            <person name="Iacobini E.T."/>
            <person name="Brettoni C."/>
            <person name="Galli G."/>
            <person name="Mariani M."/>
            <person name="Vegni F."/>
            <person name="Maione D."/>
            <person name="Rinaudo D."/>
            <person name="Rappuoli R."/>
            <person name="Telford J.L."/>
            <person name="Kasper D.L."/>
            <person name="Grandi G."/>
            <person name="Fraser C.M."/>
        </authorList>
    </citation>
    <scope>NUCLEOTIDE SEQUENCE [LARGE SCALE GENOMIC DNA]</scope>
    <source>
        <strain>ATCC BAA-611 / 2603 V/R</strain>
    </source>
</reference>
<evidence type="ECO:0000255" key="1">
    <source>
        <dbReference type="HAMAP-Rule" id="MF_00984"/>
    </source>
</evidence>
<proteinExistence type="inferred from homology"/>
<sequence length="131" mass="14775">MYNKVIMIGRLTAKPEMVKTPTDKSVTRATVAVNRRFKGSNGEREADFINVVMWGRLAETLASYGTKGSLISIDGELRTRKYEKDGQTHYITEVLASSFQLLESRAQRAMRENNVSGDLSDLVLEEEELPF</sequence>
<dbReference type="EMBL" id="AE009948">
    <property type="protein sequence ID" value="AAM99087.1"/>
    <property type="molecule type" value="Genomic_DNA"/>
</dbReference>
<dbReference type="RefSeq" id="NP_687215.1">
    <property type="nucleotide sequence ID" value="NC_004116.1"/>
</dbReference>
<dbReference type="RefSeq" id="WP_000282447.1">
    <property type="nucleotide sequence ID" value="NC_004116.1"/>
</dbReference>
<dbReference type="SMR" id="Q8E220"/>
<dbReference type="STRING" id="208435.SAG0180"/>
<dbReference type="KEGG" id="sag:SAG0180"/>
<dbReference type="PATRIC" id="fig|208435.3.peg.180"/>
<dbReference type="HOGENOM" id="CLU_078758_6_1_9"/>
<dbReference type="OrthoDB" id="9809878at2"/>
<dbReference type="Proteomes" id="UP000000821">
    <property type="component" value="Chromosome"/>
</dbReference>
<dbReference type="GO" id="GO:0009295">
    <property type="term" value="C:nucleoid"/>
    <property type="evidence" value="ECO:0007669"/>
    <property type="project" value="TreeGrafter"/>
</dbReference>
<dbReference type="GO" id="GO:0003697">
    <property type="term" value="F:single-stranded DNA binding"/>
    <property type="evidence" value="ECO:0007669"/>
    <property type="project" value="UniProtKB-UniRule"/>
</dbReference>
<dbReference type="GO" id="GO:0006310">
    <property type="term" value="P:DNA recombination"/>
    <property type="evidence" value="ECO:0007669"/>
    <property type="project" value="UniProtKB-UniRule"/>
</dbReference>
<dbReference type="GO" id="GO:0006281">
    <property type="term" value="P:DNA repair"/>
    <property type="evidence" value="ECO:0007669"/>
    <property type="project" value="UniProtKB-UniRule"/>
</dbReference>
<dbReference type="GO" id="GO:0006260">
    <property type="term" value="P:DNA replication"/>
    <property type="evidence" value="ECO:0007669"/>
    <property type="project" value="UniProtKB-UniRule"/>
</dbReference>
<dbReference type="CDD" id="cd04496">
    <property type="entry name" value="SSB_OBF"/>
    <property type="match status" value="1"/>
</dbReference>
<dbReference type="Gene3D" id="2.40.50.140">
    <property type="entry name" value="Nucleic acid-binding proteins"/>
    <property type="match status" value="1"/>
</dbReference>
<dbReference type="HAMAP" id="MF_00984">
    <property type="entry name" value="SSB"/>
    <property type="match status" value="1"/>
</dbReference>
<dbReference type="InterPro" id="IPR012340">
    <property type="entry name" value="NA-bd_OB-fold"/>
</dbReference>
<dbReference type="InterPro" id="IPR000424">
    <property type="entry name" value="Primosome_PriB/ssb"/>
</dbReference>
<dbReference type="InterPro" id="IPR011344">
    <property type="entry name" value="ssDNA-bd"/>
</dbReference>
<dbReference type="NCBIfam" id="NF005579">
    <property type="entry name" value="PRK07274.1"/>
    <property type="match status" value="1"/>
</dbReference>
<dbReference type="NCBIfam" id="TIGR00621">
    <property type="entry name" value="ssb"/>
    <property type="match status" value="1"/>
</dbReference>
<dbReference type="PANTHER" id="PTHR10302">
    <property type="entry name" value="SINGLE-STRANDED DNA-BINDING PROTEIN"/>
    <property type="match status" value="1"/>
</dbReference>
<dbReference type="PANTHER" id="PTHR10302:SF27">
    <property type="entry name" value="SINGLE-STRANDED DNA-BINDING PROTEIN"/>
    <property type="match status" value="1"/>
</dbReference>
<dbReference type="Pfam" id="PF00436">
    <property type="entry name" value="SSB"/>
    <property type="match status" value="1"/>
</dbReference>
<dbReference type="PIRSF" id="PIRSF002070">
    <property type="entry name" value="SSB"/>
    <property type="match status" value="1"/>
</dbReference>
<dbReference type="SUPFAM" id="SSF50249">
    <property type="entry name" value="Nucleic acid-binding proteins"/>
    <property type="match status" value="1"/>
</dbReference>
<dbReference type="PROSITE" id="PS50935">
    <property type="entry name" value="SSB"/>
    <property type="match status" value="1"/>
</dbReference>
<organism>
    <name type="scientific">Streptococcus agalactiae serotype V (strain ATCC BAA-611 / 2603 V/R)</name>
    <dbReference type="NCBI Taxonomy" id="208435"/>
    <lineage>
        <taxon>Bacteria</taxon>
        <taxon>Bacillati</taxon>
        <taxon>Bacillota</taxon>
        <taxon>Bacilli</taxon>
        <taxon>Lactobacillales</taxon>
        <taxon>Streptococcaceae</taxon>
        <taxon>Streptococcus</taxon>
    </lineage>
</organism>
<comment type="function">
    <text evidence="1">Plays an important role in DNA replication, recombination and repair. Binds to ssDNA and to an array of partner proteins to recruit them to their sites of action during DNA metabolism.</text>
</comment>
<comment type="subunit">
    <text evidence="1">Homotetramer.</text>
</comment>
<accession>Q8E220</accession>
<keyword id="KW-0227">DNA damage</keyword>
<keyword id="KW-0233">DNA recombination</keyword>
<keyword id="KW-0234">DNA repair</keyword>
<keyword id="KW-0235">DNA replication</keyword>
<keyword id="KW-0238">DNA-binding</keyword>
<keyword id="KW-1185">Reference proteome</keyword>
<feature type="chain" id="PRO_0000096110" description="Single-stranded DNA-binding protein 2">
    <location>
        <begin position="1"/>
        <end position="131"/>
    </location>
</feature>
<feature type="domain" description="SSB" evidence="1">
    <location>
        <begin position="1"/>
        <end position="103"/>
    </location>
</feature>
<feature type="short sequence motif" description="Important for interaction with partner proteins" evidence="1">
    <location>
        <begin position="126"/>
        <end position="131"/>
    </location>
</feature>
<protein>
    <recommendedName>
        <fullName evidence="1">Single-stranded DNA-binding protein 2</fullName>
        <shortName evidence="1">SSB 2</shortName>
    </recommendedName>
</protein>
<name>SSB2_STRA5</name>
<gene>
    <name type="primary">ssb2</name>
    <name type="ordered locus">SAG0180</name>
</gene>